<gene>
    <name type="primary">UL20</name>
</gene>
<proteinExistence type="inferred from homology"/>
<evidence type="ECO:0000250" key="1"/>
<evidence type="ECO:0000255" key="2"/>
<evidence type="ECO:0000305" key="3"/>
<name>UL20_PSHV1</name>
<accession>Q6UDI5</accession>
<dbReference type="EMBL" id="AY372243">
    <property type="protein sequence ID" value="AAQ73725.1"/>
    <property type="molecule type" value="Genomic_DNA"/>
</dbReference>
<dbReference type="RefSeq" id="NP_944419.1">
    <property type="nucleotide sequence ID" value="NC_005264.1"/>
</dbReference>
<dbReference type="GeneID" id="2656981"/>
<dbReference type="KEGG" id="vg:2656981"/>
<dbReference type="Proteomes" id="UP000006840">
    <property type="component" value="Segment"/>
</dbReference>
<dbReference type="GO" id="GO:0044175">
    <property type="term" value="C:host cell endosome membrane"/>
    <property type="evidence" value="ECO:0007669"/>
    <property type="project" value="UniProtKB-SubCell"/>
</dbReference>
<dbReference type="GO" id="GO:0044178">
    <property type="term" value="C:host cell Golgi membrane"/>
    <property type="evidence" value="ECO:0007669"/>
    <property type="project" value="UniProtKB-SubCell"/>
</dbReference>
<dbReference type="GO" id="GO:0044200">
    <property type="term" value="C:host cell nuclear membrane"/>
    <property type="evidence" value="ECO:0007669"/>
    <property type="project" value="UniProtKB-SubCell"/>
</dbReference>
<dbReference type="GO" id="GO:0020002">
    <property type="term" value="C:host cell plasma membrane"/>
    <property type="evidence" value="ECO:0007669"/>
    <property type="project" value="UniProtKB-SubCell"/>
</dbReference>
<dbReference type="GO" id="GO:0016020">
    <property type="term" value="C:membrane"/>
    <property type="evidence" value="ECO:0007669"/>
    <property type="project" value="UniProtKB-KW"/>
</dbReference>
<dbReference type="GO" id="GO:0044423">
    <property type="term" value="C:virion component"/>
    <property type="evidence" value="ECO:0007669"/>
    <property type="project" value="UniProtKB-KW"/>
</dbReference>
<dbReference type="GO" id="GO:0019058">
    <property type="term" value="P:viral life cycle"/>
    <property type="evidence" value="ECO:0007669"/>
    <property type="project" value="InterPro"/>
</dbReference>
<dbReference type="InterPro" id="IPR007629">
    <property type="entry name" value="Herpes_UL20"/>
</dbReference>
<dbReference type="Pfam" id="PF04544">
    <property type="entry name" value="Herpes_UL20"/>
    <property type="match status" value="1"/>
</dbReference>
<protein>
    <recommendedName>
        <fullName>Protein UL20</fullName>
    </recommendedName>
</protein>
<organismHost>
    <name type="scientific">Amazona oratrix</name>
    <name type="common">yellow-headed parrot</name>
    <dbReference type="NCBI Taxonomy" id="152276"/>
</organismHost>
<reference key="1">
    <citation type="journal article" date="2006" name="J. Virol.">
        <title>Psittacid herpesvirus 1 and infectious laryngotracheitis virus: Comparative genome sequence analysis of two avian alphaherpesviruses.</title>
        <authorList>
            <person name="Thureen D.R."/>
            <person name="Keeler C.L. Jr."/>
        </authorList>
    </citation>
    <scope>NUCLEOTIDE SEQUENCE [LARGE SCALE GENOMIC DNA]</scope>
</reference>
<keyword id="KW-1032">Host cell membrane</keyword>
<keyword id="KW-1039">Host endosome</keyword>
<keyword id="KW-1040">Host Golgi apparatus</keyword>
<keyword id="KW-1043">Host membrane</keyword>
<keyword id="KW-1048">Host nucleus</keyword>
<keyword id="KW-0472">Membrane</keyword>
<keyword id="KW-1185">Reference proteome</keyword>
<keyword id="KW-0812">Transmembrane</keyword>
<keyword id="KW-1133">Transmembrane helix</keyword>
<keyword id="KW-0946">Virion</keyword>
<comment type="function">
    <text evidence="1">Plays an essential role in egress of virus particles from the nucleus, cytoplasmic envelopment and virus-induced cell fusion. Forms a functional protein complex with gK and this interaction is absolutely essential for their coordinate intracellular transport, gK glycosylation, expression on host cell surface, and function. Together, they modulate gB-mediated virus-induced cell fusion and virion egress and therefore actively participate in these processes (By similarity).</text>
</comment>
<comment type="subunit">
    <text evidence="1">Interacts with gK (via N-terminus); this interaction plays a role in the coordinate transport of UL20 and gK to the trans-Golgi network (TGN), and is required for their cell surface expression. Interacts with gB (By similarity).</text>
</comment>
<comment type="subcellular location">
    <subcellularLocation>
        <location evidence="1">Virion</location>
    </subcellularLocation>
    <subcellularLocation>
        <location evidence="1">Host cell membrane</location>
        <topology evidence="1">Multi-pass membrane protein</topology>
    </subcellularLocation>
    <subcellularLocation>
        <location evidence="1">Host endosome membrane</location>
        <topology evidence="1">Multi-pass membrane protein</topology>
    </subcellularLocation>
    <subcellularLocation>
        <location evidence="1">Host Golgi apparatus membrane</location>
        <topology evidence="1">Multi-pass membrane protein</topology>
    </subcellularLocation>
    <subcellularLocation>
        <location evidence="1">Host nucleus membrane</location>
        <topology evidence="1">Multi-pass membrane protein</topology>
    </subcellularLocation>
    <text evidence="1">During virion morphogenesis, this protein probably accumulates in the endosomes and trans-Golgi where secondary envelopment occurs. It is probably transported with gK to the cell surface from where it is endocytosed and directed to the trans-Golgi network (TGN) (By similarity).</text>
</comment>
<comment type="similarity">
    <text evidence="3">Belongs to the alphaherpesvirinae UL20 family.</text>
</comment>
<organism>
    <name type="scientific">Psittacid herpesvirus 1 (isolate Amazon parrot/-/97-0001/1997)</name>
    <name type="common">PsHV-1</name>
    <name type="synonym">Pacheco's disease virus</name>
    <dbReference type="NCBI Taxonomy" id="670426"/>
    <lineage>
        <taxon>Viruses</taxon>
        <taxon>Duplodnaviria</taxon>
        <taxon>Heunggongvirae</taxon>
        <taxon>Peploviricota</taxon>
        <taxon>Herviviricetes</taxon>
        <taxon>Herpesvirales</taxon>
        <taxon>Orthoherpesviridae</taxon>
        <taxon>Alphaherpesvirinae</taxon>
        <taxon>Iltovirus</taxon>
        <taxon>Iltovirus psittacidalpha1</taxon>
        <taxon>Psittacid alphaherpesvirus 1</taxon>
    </lineage>
</organism>
<feature type="chain" id="PRO_0000406863" description="Protein UL20">
    <location>
        <begin position="1"/>
        <end position="248"/>
    </location>
</feature>
<feature type="transmembrane region" description="Helical" evidence="2">
    <location>
        <begin position="82"/>
        <end position="102"/>
    </location>
</feature>
<feature type="transmembrane region" description="Helical" evidence="2">
    <location>
        <begin position="114"/>
        <end position="134"/>
    </location>
</feature>
<feature type="transmembrane region" description="Helical" evidence="2">
    <location>
        <begin position="153"/>
        <end position="173"/>
    </location>
</feature>
<feature type="transmembrane region" description="Helical" evidence="2">
    <location>
        <begin position="218"/>
        <end position="238"/>
    </location>
</feature>
<sequence>MADASAPDKKNAPTNALKPDLIKIAVERVLAAIDTENNEDLILAAAREPREVVAARAPDLFTSAAYSWSEEDELGTRMRASSFFPVASMFAKIICCLFLLWAKSCTGHGAMVTGLTACTGAYAIASLLCSFVVYYNVRTDNMPFGTYTKLFQIAACIGCGCYALGLTMEKLFGDSEMYFALFPDAKNSPLVGATAKGSALILPQGCSVAPYVPLAVSVAYCAAVVYDIADTIFPLLWVRTTLNEFAVF</sequence>